<dbReference type="EMBL" id="CH477282">
    <property type="protein sequence ID" value="EAT44888.1"/>
    <property type="molecule type" value="Genomic_DNA"/>
</dbReference>
<dbReference type="RefSeq" id="XP_001664178.1">
    <property type="nucleotide sequence ID" value="XM_001664128.1"/>
</dbReference>
<dbReference type="SMR" id="Q17EJ1"/>
<dbReference type="FunCoup" id="Q17EJ1">
    <property type="interactions" value="1979"/>
</dbReference>
<dbReference type="STRING" id="7159.Q17EJ1"/>
<dbReference type="PaxDb" id="7159-AAEL003813-PA"/>
<dbReference type="VEuPathDB" id="VectorBase:AAEL023552"/>
<dbReference type="eggNOG" id="KOG2485">
    <property type="taxonomic scope" value="Eukaryota"/>
</dbReference>
<dbReference type="HOGENOM" id="CLU_011106_0_2_1"/>
<dbReference type="InParanoid" id="Q17EJ1"/>
<dbReference type="OMA" id="GVLWPKF"/>
<dbReference type="PhylomeDB" id="Q17EJ1"/>
<dbReference type="Proteomes" id="UP000008820">
    <property type="component" value="Unassembled WGS sequence"/>
</dbReference>
<dbReference type="Proteomes" id="UP000682892">
    <property type="component" value="Unassembled WGS sequence"/>
</dbReference>
<dbReference type="GO" id="GO:0005743">
    <property type="term" value="C:mitochondrial inner membrane"/>
    <property type="evidence" value="ECO:0007669"/>
    <property type="project" value="UniProtKB-SubCell"/>
</dbReference>
<dbReference type="GO" id="GO:0005525">
    <property type="term" value="F:GTP binding"/>
    <property type="evidence" value="ECO:0007669"/>
    <property type="project" value="UniProtKB-KW"/>
</dbReference>
<dbReference type="GO" id="GO:0003924">
    <property type="term" value="F:GTPase activity"/>
    <property type="evidence" value="ECO:0007669"/>
    <property type="project" value="TreeGrafter"/>
</dbReference>
<dbReference type="GO" id="GO:0032543">
    <property type="term" value="P:mitochondrial translation"/>
    <property type="evidence" value="ECO:0007669"/>
    <property type="project" value="TreeGrafter"/>
</dbReference>
<dbReference type="CDD" id="cd01856">
    <property type="entry name" value="YlqF"/>
    <property type="match status" value="1"/>
</dbReference>
<dbReference type="FunFam" id="1.10.1580.10:FF:000004">
    <property type="entry name" value="Mitochondrial GTPase 1"/>
    <property type="match status" value="1"/>
</dbReference>
<dbReference type="FunFam" id="3.40.50.300:FF:000876">
    <property type="entry name" value="Mitochondrial GTPase 1"/>
    <property type="match status" value="1"/>
</dbReference>
<dbReference type="Gene3D" id="1.10.1580.10">
    <property type="match status" value="1"/>
</dbReference>
<dbReference type="Gene3D" id="3.40.50.300">
    <property type="entry name" value="P-loop containing nucleotide triphosphate hydrolases"/>
    <property type="match status" value="1"/>
</dbReference>
<dbReference type="InterPro" id="IPR030378">
    <property type="entry name" value="G_CP_dom"/>
</dbReference>
<dbReference type="InterPro" id="IPR006073">
    <property type="entry name" value="GTP-bd"/>
</dbReference>
<dbReference type="InterPro" id="IPR023179">
    <property type="entry name" value="GTP-bd_ortho_bundle_sf"/>
</dbReference>
<dbReference type="InterPro" id="IPR016478">
    <property type="entry name" value="GTPase_MTG1"/>
</dbReference>
<dbReference type="InterPro" id="IPR027417">
    <property type="entry name" value="P-loop_NTPase"/>
</dbReference>
<dbReference type="PANTHER" id="PTHR45782">
    <property type="entry name" value="MITOCHONDRIAL RIBOSOME-ASSOCIATED GTPASE 1"/>
    <property type="match status" value="1"/>
</dbReference>
<dbReference type="PANTHER" id="PTHR45782:SF4">
    <property type="entry name" value="MITOCHONDRIAL RIBOSOME-ASSOCIATED GTPASE 1"/>
    <property type="match status" value="1"/>
</dbReference>
<dbReference type="Pfam" id="PF01926">
    <property type="entry name" value="MMR_HSR1"/>
    <property type="match status" value="1"/>
</dbReference>
<dbReference type="PIRSF" id="PIRSF006230">
    <property type="entry name" value="MG442"/>
    <property type="match status" value="1"/>
</dbReference>
<dbReference type="PRINTS" id="PR00326">
    <property type="entry name" value="GTP1OBG"/>
</dbReference>
<dbReference type="SUPFAM" id="SSF52540">
    <property type="entry name" value="P-loop containing nucleoside triphosphate hydrolases"/>
    <property type="match status" value="1"/>
</dbReference>
<dbReference type="PROSITE" id="PS51721">
    <property type="entry name" value="G_CP"/>
    <property type="match status" value="1"/>
</dbReference>
<sequence>MSNAFRTVFPTVNRELLNWFPGHMGKGMKQMQQKLKQVDCVIEVHDARIPLSGRNSEFRYTISGVKPHILVLNKKDKIDRRLQGRVVDRLQQEDSEARHILFTNCKDQSCNGIRKVMPLAQDLILSSNRFNRADQKEYCIMIIGVPNVGKSSLINVLRNRHLNKKGASQVGAVAGITRSVLNKIKISEDPLVYLLDTPGILKPNIADTETGLRLALVSCLQDHLVGEELIADYLLYLLNKRGNFKYVELMGLKEPTDSIAEVLIAGSKHLDKTVRVRHYDGSFVIRPDAMLAARHMIKAFRTGAFGKILIDDDKFV</sequence>
<keyword id="KW-0342">GTP-binding</keyword>
<keyword id="KW-0472">Membrane</keyword>
<keyword id="KW-0496">Mitochondrion</keyword>
<keyword id="KW-0999">Mitochondrion inner membrane</keyword>
<keyword id="KW-0547">Nucleotide-binding</keyword>
<keyword id="KW-1185">Reference proteome</keyword>
<keyword id="KW-0809">Transit peptide</keyword>
<feature type="transit peptide" description="Mitochondrion" evidence="2 3">
    <location>
        <begin position="1"/>
        <end status="unknown"/>
    </location>
</feature>
<feature type="chain" id="PRO_0000409877" description="Mitochondrial GTPase 1" evidence="2">
    <location>
        <begin status="unknown"/>
        <end position="316"/>
    </location>
</feature>
<feature type="domain" description="CP-type G" evidence="4">
    <location>
        <begin position="28"/>
        <end position="203"/>
    </location>
</feature>
<feature type="binding site" evidence="1">
    <location>
        <begin position="73"/>
        <end position="76"/>
    </location>
    <ligand>
        <name>GTP</name>
        <dbReference type="ChEBI" id="CHEBI:37565"/>
    </ligand>
</feature>
<feature type="binding site" evidence="1">
    <location>
        <begin position="147"/>
        <end position="152"/>
    </location>
    <ligand>
        <name>GTP</name>
        <dbReference type="ChEBI" id="CHEBI:37565"/>
    </ligand>
</feature>
<feature type="binding site" evidence="1">
    <location>
        <position position="199"/>
    </location>
    <ligand>
        <name>GTP</name>
        <dbReference type="ChEBI" id="CHEBI:37565"/>
    </ligand>
</feature>
<proteinExistence type="inferred from homology"/>
<name>MTG1_AEDAE</name>
<reference evidence="5" key="1">
    <citation type="journal article" date="2007" name="Science">
        <title>Genome sequence of Aedes aegypti, a major arbovirus vector.</title>
        <authorList>
            <person name="Nene V."/>
            <person name="Wortman J.R."/>
            <person name="Lawson D."/>
            <person name="Haas B.J."/>
            <person name="Kodira C.D."/>
            <person name="Tu Z.J."/>
            <person name="Loftus B.J."/>
            <person name="Xi Z."/>
            <person name="Megy K."/>
            <person name="Grabherr M."/>
            <person name="Ren Q."/>
            <person name="Zdobnov E.M."/>
            <person name="Lobo N.F."/>
            <person name="Campbell K.S."/>
            <person name="Brown S.E."/>
            <person name="Bonaldo M.F."/>
            <person name="Zhu J."/>
            <person name="Sinkins S.P."/>
            <person name="Hogenkamp D.G."/>
            <person name="Amedeo P."/>
            <person name="Arensburger P."/>
            <person name="Atkinson P.W."/>
            <person name="Bidwell S.L."/>
            <person name="Biedler J."/>
            <person name="Birney E."/>
            <person name="Bruggner R.V."/>
            <person name="Costas J."/>
            <person name="Coy M.R."/>
            <person name="Crabtree J."/>
            <person name="Crawford M."/>
            <person name="DeBruyn B."/>
            <person name="DeCaprio D."/>
            <person name="Eiglmeier K."/>
            <person name="Eisenstadt E."/>
            <person name="El-Dorry H."/>
            <person name="Gelbart W.M."/>
            <person name="Gomes S.L."/>
            <person name="Hammond M."/>
            <person name="Hannick L.I."/>
            <person name="Hogan J.R."/>
            <person name="Holmes M.H."/>
            <person name="Jaffe D."/>
            <person name="Johnston S.J."/>
            <person name="Kennedy R.C."/>
            <person name="Koo H."/>
            <person name="Kravitz S."/>
            <person name="Kriventseva E.V."/>
            <person name="Kulp D."/>
            <person name="Labutti K."/>
            <person name="Lee E."/>
            <person name="Li S."/>
            <person name="Lovin D.D."/>
            <person name="Mao C."/>
            <person name="Mauceli E."/>
            <person name="Menck C.F."/>
            <person name="Miller J.R."/>
            <person name="Montgomery P."/>
            <person name="Mori A."/>
            <person name="Nascimento A.L."/>
            <person name="Naveira H.F."/>
            <person name="Nusbaum C."/>
            <person name="O'Leary S.B."/>
            <person name="Orvis J."/>
            <person name="Pertea M."/>
            <person name="Quesneville H."/>
            <person name="Reidenbach K.R."/>
            <person name="Rogers Y.-H.C."/>
            <person name="Roth C.W."/>
            <person name="Schneider J.R."/>
            <person name="Schatz M."/>
            <person name="Shumway M."/>
            <person name="Stanke M."/>
            <person name="Stinson E.O."/>
            <person name="Tubio J.M.C."/>
            <person name="Vanzee J.P."/>
            <person name="Verjovski-Almeida S."/>
            <person name="Werner D."/>
            <person name="White O.R."/>
            <person name="Wyder S."/>
            <person name="Zeng Q."/>
            <person name="Zhao Q."/>
            <person name="Zhao Y."/>
            <person name="Hill C.A."/>
            <person name="Raikhel A.S."/>
            <person name="Soares M.B."/>
            <person name="Knudson D.L."/>
            <person name="Lee N.H."/>
            <person name="Galagan J."/>
            <person name="Salzberg S.L."/>
            <person name="Paulsen I.T."/>
            <person name="Dimopoulos G."/>
            <person name="Collins F.H."/>
            <person name="Bruce B."/>
            <person name="Fraser-Liggett C.M."/>
            <person name="Severson D.W."/>
        </authorList>
    </citation>
    <scope>NUCLEOTIDE SEQUENCE [LARGE SCALE GENOMIC DNA]</scope>
    <source>
        <strain>LVPib12</strain>
    </source>
</reference>
<organism>
    <name type="scientific">Aedes aegypti</name>
    <name type="common">Yellowfever mosquito</name>
    <name type="synonym">Culex aegypti</name>
    <dbReference type="NCBI Taxonomy" id="7159"/>
    <lineage>
        <taxon>Eukaryota</taxon>
        <taxon>Metazoa</taxon>
        <taxon>Ecdysozoa</taxon>
        <taxon>Arthropoda</taxon>
        <taxon>Hexapoda</taxon>
        <taxon>Insecta</taxon>
        <taxon>Pterygota</taxon>
        <taxon>Neoptera</taxon>
        <taxon>Endopterygota</taxon>
        <taxon>Diptera</taxon>
        <taxon>Nematocera</taxon>
        <taxon>Culicoidea</taxon>
        <taxon>Culicidae</taxon>
        <taxon>Culicinae</taxon>
        <taxon>Aedini</taxon>
        <taxon>Aedes</taxon>
        <taxon>Stegomyia</taxon>
    </lineage>
</organism>
<gene>
    <name type="ORF">AAEL003813</name>
</gene>
<comment type="function">
    <text evidence="2">Plays a role in the regulation of the mitochondrial ribosome assembly and of translational activity (By similarity). Displays mitochondrial GTPase activity (By similarity).</text>
</comment>
<comment type="subcellular location">
    <subcellularLocation>
        <location evidence="2">Mitochondrion inner membrane</location>
        <topology evidence="2">Peripheral membrane protein</topology>
        <orientation evidence="2">Matrix side</orientation>
    </subcellularLocation>
</comment>
<comment type="similarity">
    <text evidence="4">Belongs to the TRAFAC class YlqF/YawG GTPase family. MTG1 subfamily.</text>
</comment>
<accession>Q17EJ1</accession>
<evidence type="ECO:0000250" key="1">
    <source>
        <dbReference type="UniProtKB" id="O31743"/>
    </source>
</evidence>
<evidence type="ECO:0000250" key="2">
    <source>
        <dbReference type="UniProtKB" id="Q9BT17"/>
    </source>
</evidence>
<evidence type="ECO:0000255" key="3"/>
<evidence type="ECO:0000255" key="4">
    <source>
        <dbReference type="PROSITE-ProRule" id="PRU01058"/>
    </source>
</evidence>
<evidence type="ECO:0000312" key="5">
    <source>
        <dbReference type="EMBL" id="EAT44888.1"/>
    </source>
</evidence>
<protein>
    <recommendedName>
        <fullName evidence="2">Mitochondrial GTPase 1</fullName>
    </recommendedName>
</protein>